<gene>
    <name evidence="32" type="primary">ILK</name>
    <name evidence="27" type="synonym">ILK1</name>
    <name evidence="27" type="synonym">ILK2</name>
</gene>
<dbReference type="EMBL" id="U40282">
    <property type="protein sequence ID" value="AAC16892.1"/>
    <property type="molecule type" value="mRNA"/>
</dbReference>
<dbReference type="EMBL" id="AJ277481">
    <property type="protein sequence ID" value="CAB94832.1"/>
    <property type="status" value="ALT_SEQ"/>
    <property type="molecule type" value="mRNA"/>
</dbReference>
<dbReference type="EMBL" id="AF244139">
    <property type="protein sequence ID" value="AAF74449.1"/>
    <property type="molecule type" value="Genomic_DNA"/>
</dbReference>
<dbReference type="EMBL" id="AJ404847">
    <property type="protein sequence ID" value="CAB99253.1"/>
    <property type="molecule type" value="Genomic_DNA"/>
</dbReference>
<dbReference type="EMBL" id="AK293474">
    <property type="protein sequence ID" value="BAH11516.1"/>
    <property type="molecule type" value="mRNA"/>
</dbReference>
<dbReference type="EMBL" id="AK296628">
    <property type="protein sequence ID" value="BAH12404.1"/>
    <property type="molecule type" value="mRNA"/>
</dbReference>
<dbReference type="EMBL" id="CR407673">
    <property type="protein sequence ID" value="CAG28601.1"/>
    <property type="molecule type" value="mRNA"/>
</dbReference>
<dbReference type="EMBL" id="CR749220">
    <property type="protein sequence ID" value="CAH18077.1"/>
    <property type="molecule type" value="mRNA"/>
</dbReference>
<dbReference type="EMBL" id="AC091564">
    <property type="status" value="NOT_ANNOTATED_CDS"/>
    <property type="molecule type" value="Genomic_DNA"/>
</dbReference>
<dbReference type="EMBL" id="CH471064">
    <property type="protein sequence ID" value="EAW68688.1"/>
    <property type="molecule type" value="Genomic_DNA"/>
</dbReference>
<dbReference type="EMBL" id="CH471064">
    <property type="protein sequence ID" value="EAW68689.1"/>
    <property type="molecule type" value="Genomic_DNA"/>
</dbReference>
<dbReference type="EMBL" id="CH471064">
    <property type="protein sequence ID" value="EAW68690.1"/>
    <property type="molecule type" value="Genomic_DNA"/>
</dbReference>
<dbReference type="EMBL" id="BC001554">
    <property type="protein sequence ID" value="AAH01554.1"/>
    <property type="molecule type" value="mRNA"/>
</dbReference>
<dbReference type="CCDS" id="CCDS60712.1">
    <molecule id="Q13418-2"/>
</dbReference>
<dbReference type="CCDS" id="CCDS60713.1">
    <molecule id="Q13418-3"/>
</dbReference>
<dbReference type="CCDS" id="CCDS7768.1">
    <molecule id="Q13418-1"/>
</dbReference>
<dbReference type="PIR" id="S68455">
    <property type="entry name" value="S68455"/>
</dbReference>
<dbReference type="RefSeq" id="NP_001014794.1">
    <molecule id="Q13418-1"/>
    <property type="nucleotide sequence ID" value="NM_001014794.3"/>
</dbReference>
<dbReference type="RefSeq" id="NP_001014795.1">
    <molecule id="Q13418-1"/>
    <property type="nucleotide sequence ID" value="NM_001014795.3"/>
</dbReference>
<dbReference type="RefSeq" id="NP_001265370.1">
    <molecule id="Q13418-2"/>
    <property type="nucleotide sequence ID" value="NM_001278441.2"/>
</dbReference>
<dbReference type="RefSeq" id="NP_001265371.1">
    <molecule id="Q13418-3"/>
    <property type="nucleotide sequence ID" value="NM_001278442.2"/>
</dbReference>
<dbReference type="RefSeq" id="NP_004508.1">
    <molecule id="Q13418-1"/>
    <property type="nucleotide sequence ID" value="NM_004517.4"/>
</dbReference>
<dbReference type="RefSeq" id="XP_005252961.1">
    <molecule id="Q13418-1"/>
    <property type="nucleotide sequence ID" value="XM_005252904.6"/>
</dbReference>
<dbReference type="RefSeq" id="XP_005252962.1">
    <property type="nucleotide sequence ID" value="XM_005252905.2"/>
</dbReference>
<dbReference type="RefSeq" id="XP_011518367.1">
    <molecule id="Q13418-1"/>
    <property type="nucleotide sequence ID" value="XM_011520065.2"/>
</dbReference>
<dbReference type="RefSeq" id="XP_047282841.1">
    <molecule id="Q13418-3"/>
    <property type="nucleotide sequence ID" value="XM_047426885.1"/>
</dbReference>
<dbReference type="PDB" id="2KBX">
    <property type="method" value="NMR"/>
    <property type="chains" value="A=1-171"/>
</dbReference>
<dbReference type="PDB" id="3F6Q">
    <property type="method" value="X-ray"/>
    <property type="resolution" value="1.60 A"/>
    <property type="chains" value="A=1-170"/>
</dbReference>
<dbReference type="PDB" id="3IXE">
    <property type="method" value="X-ray"/>
    <property type="resolution" value="1.90 A"/>
    <property type="chains" value="A=1-174"/>
</dbReference>
<dbReference type="PDB" id="3KMU">
    <property type="method" value="X-ray"/>
    <property type="resolution" value="1.80 A"/>
    <property type="chains" value="A=183-452"/>
</dbReference>
<dbReference type="PDB" id="3KMW">
    <property type="method" value="X-ray"/>
    <property type="resolution" value="2.00 A"/>
    <property type="chains" value="A=183-452"/>
</dbReference>
<dbReference type="PDB" id="3REP">
    <property type="method" value="X-ray"/>
    <property type="resolution" value="1.80 A"/>
    <property type="chains" value="A=183-452"/>
</dbReference>
<dbReference type="PDB" id="4HI8">
    <property type="method" value="X-ray"/>
    <property type="resolution" value="1.20 A"/>
    <property type="chains" value="A=1-174"/>
</dbReference>
<dbReference type="PDB" id="4HI9">
    <property type="method" value="X-ray"/>
    <property type="resolution" value="1.20 A"/>
    <property type="chains" value="A=1-174"/>
</dbReference>
<dbReference type="PDB" id="6MIB">
    <property type="method" value="X-ray"/>
    <property type="resolution" value="1.80 A"/>
    <property type="chains" value="A=182-452"/>
</dbReference>
<dbReference type="PDBsum" id="2KBX"/>
<dbReference type="PDBsum" id="3F6Q"/>
<dbReference type="PDBsum" id="3IXE"/>
<dbReference type="PDBsum" id="3KMU"/>
<dbReference type="PDBsum" id="3KMW"/>
<dbReference type="PDBsum" id="3REP"/>
<dbReference type="PDBsum" id="4HI8"/>
<dbReference type="PDBsum" id="4HI9"/>
<dbReference type="PDBsum" id="6MIB"/>
<dbReference type="BMRB" id="Q13418"/>
<dbReference type="SMR" id="Q13418"/>
<dbReference type="BioGRID" id="109824">
    <property type="interactions" value="314"/>
</dbReference>
<dbReference type="ComplexPortal" id="CPX-10304">
    <property type="entry name" value="ILK-PINCH-Parvin complex, LIMS1-PARVA variant"/>
</dbReference>
<dbReference type="ComplexPortal" id="CPX-10312">
    <property type="entry name" value="ILK-PINCH-Parvin complex, LIMS1-PARVB variant"/>
</dbReference>
<dbReference type="ComplexPortal" id="CPX-10313">
    <property type="entry name" value="ILK-PINCH-Parvin complex, LIMS2-PARVA variant"/>
</dbReference>
<dbReference type="ComplexPortal" id="CPX-10314">
    <property type="entry name" value="ILK-PINCH-Parvin complex, LIMS2-PARVB variant"/>
</dbReference>
<dbReference type="CORUM" id="Q13418"/>
<dbReference type="DIP" id="DIP-38657N"/>
<dbReference type="FunCoup" id="Q13418">
    <property type="interactions" value="1969"/>
</dbReference>
<dbReference type="IntAct" id="Q13418">
    <property type="interactions" value="218"/>
</dbReference>
<dbReference type="MINT" id="Q13418"/>
<dbReference type="STRING" id="9606.ENSP00000379975"/>
<dbReference type="BindingDB" id="Q13418"/>
<dbReference type="ChEMBL" id="CHEMBL5247"/>
<dbReference type="DrugCentral" id="Q13418"/>
<dbReference type="GuidetoPHARMACOLOGY" id="2041"/>
<dbReference type="GlyGen" id="Q13418">
    <property type="glycosylation" value="1 site, 1 O-linked glycan (1 site)"/>
</dbReference>
<dbReference type="iPTMnet" id="Q13418"/>
<dbReference type="MetOSite" id="Q13418"/>
<dbReference type="PhosphoSitePlus" id="Q13418"/>
<dbReference type="SwissPalm" id="Q13418"/>
<dbReference type="BioMuta" id="ILK"/>
<dbReference type="DMDM" id="9973397"/>
<dbReference type="OGP" id="Q13418"/>
<dbReference type="jPOST" id="Q13418"/>
<dbReference type="MassIVE" id="Q13418"/>
<dbReference type="PaxDb" id="9606-ENSP00000379975"/>
<dbReference type="PeptideAtlas" id="Q13418"/>
<dbReference type="ProteomicsDB" id="59396">
    <molecule id="Q13418-1"/>
</dbReference>
<dbReference type="ProteomicsDB" id="6331"/>
<dbReference type="ProteomicsDB" id="6564"/>
<dbReference type="Pumba" id="Q13418"/>
<dbReference type="Antibodypedia" id="23909">
    <property type="antibodies" value="824 antibodies from 43 providers"/>
</dbReference>
<dbReference type="DNASU" id="3611"/>
<dbReference type="Ensembl" id="ENST00000299421.9">
    <molecule id="Q13418-1"/>
    <property type="protein sequence ID" value="ENSP00000299421.4"/>
    <property type="gene ID" value="ENSG00000166333.14"/>
</dbReference>
<dbReference type="Ensembl" id="ENST00000396751.6">
    <molecule id="Q13418-1"/>
    <property type="protein sequence ID" value="ENSP00000379975.2"/>
    <property type="gene ID" value="ENSG00000166333.14"/>
</dbReference>
<dbReference type="Ensembl" id="ENST00000420936.6">
    <molecule id="Q13418-1"/>
    <property type="protein sequence ID" value="ENSP00000403487.2"/>
    <property type="gene ID" value="ENSG00000166333.14"/>
</dbReference>
<dbReference type="Ensembl" id="ENST00000528995.5">
    <molecule id="Q13418-2"/>
    <property type="protein sequence ID" value="ENSP00000435323.1"/>
    <property type="gene ID" value="ENSG00000166333.14"/>
</dbReference>
<dbReference type="Ensembl" id="ENST00000532063.5">
    <molecule id="Q13418-3"/>
    <property type="protein sequence ID" value="ENSP00000434492.2"/>
    <property type="gene ID" value="ENSG00000166333.14"/>
</dbReference>
<dbReference type="GeneID" id="3611"/>
<dbReference type="KEGG" id="hsa:3611"/>
<dbReference type="MANE-Select" id="ENST00000299421.9">
    <property type="protein sequence ID" value="ENSP00000299421.4"/>
    <property type="RefSeq nucleotide sequence ID" value="NM_004517.4"/>
    <property type="RefSeq protein sequence ID" value="NP_004508.1"/>
</dbReference>
<dbReference type="UCSC" id="uc010rap.3">
    <molecule id="Q13418-1"/>
    <property type="organism name" value="human"/>
</dbReference>
<dbReference type="AGR" id="HGNC:6040"/>
<dbReference type="CTD" id="3611"/>
<dbReference type="DisGeNET" id="3611"/>
<dbReference type="GeneCards" id="ILK"/>
<dbReference type="HGNC" id="HGNC:6040">
    <property type="gene designation" value="ILK"/>
</dbReference>
<dbReference type="HPA" id="ENSG00000166333">
    <property type="expression patterns" value="Low tissue specificity"/>
</dbReference>
<dbReference type="MalaCards" id="ILK"/>
<dbReference type="MIM" id="602366">
    <property type="type" value="gene"/>
</dbReference>
<dbReference type="neXtProt" id="NX_Q13418"/>
<dbReference type="OpenTargets" id="ENSG00000166333"/>
<dbReference type="PharmGKB" id="PA29855"/>
<dbReference type="VEuPathDB" id="HostDB:ENSG00000166333"/>
<dbReference type="eggNOG" id="KOG0195">
    <property type="taxonomic scope" value="Eukaryota"/>
</dbReference>
<dbReference type="GeneTree" id="ENSGT00940000155956"/>
<dbReference type="HOGENOM" id="CLU_000288_7_35_1"/>
<dbReference type="InParanoid" id="Q13418"/>
<dbReference type="OMA" id="CREGNAM"/>
<dbReference type="OrthoDB" id="6718656at2759"/>
<dbReference type="PAN-GO" id="Q13418">
    <property type="GO annotations" value="6 GO annotations based on evolutionary models"/>
</dbReference>
<dbReference type="PhylomeDB" id="Q13418"/>
<dbReference type="TreeFam" id="TF315194"/>
<dbReference type="BRENDA" id="2.7.10.2">
    <property type="organism ID" value="2681"/>
</dbReference>
<dbReference type="PathwayCommons" id="Q13418"/>
<dbReference type="Reactome" id="R-HSA-446343">
    <property type="pathway name" value="Localization of the PINCH-ILK-PARVIN complex to focal adhesions"/>
</dbReference>
<dbReference type="Reactome" id="R-HSA-446353">
    <property type="pathway name" value="Cell-extracellular matrix interactions"/>
</dbReference>
<dbReference type="SignaLink" id="Q13418"/>
<dbReference type="SIGNOR" id="Q13418"/>
<dbReference type="BioGRID-ORCS" id="3611">
    <property type="hits" value="314 hits in 1209 CRISPR screens"/>
</dbReference>
<dbReference type="CD-CODE" id="8C2F96ED">
    <property type="entry name" value="Centrosome"/>
</dbReference>
<dbReference type="ChiTaRS" id="ILK">
    <property type="organism name" value="human"/>
</dbReference>
<dbReference type="EvolutionaryTrace" id="Q13418"/>
<dbReference type="GeneWiki" id="Integrin-linked_kinase"/>
<dbReference type="GenomeRNAi" id="3611"/>
<dbReference type="Pharos" id="Q13418">
    <property type="development level" value="Tchem"/>
</dbReference>
<dbReference type="PRO" id="PR:Q13418"/>
<dbReference type="Proteomes" id="UP000005640">
    <property type="component" value="Chromosome 11"/>
</dbReference>
<dbReference type="RNAct" id="Q13418">
    <property type="molecule type" value="protein"/>
</dbReference>
<dbReference type="Bgee" id="ENSG00000166333">
    <property type="expression patterns" value="Expressed in body of uterus and 206 other cell types or tissues"/>
</dbReference>
<dbReference type="ExpressionAtlas" id="Q13418">
    <property type="expression patterns" value="baseline and differential"/>
</dbReference>
<dbReference type="GO" id="GO:0015629">
    <property type="term" value="C:actin cytoskeleton"/>
    <property type="evidence" value="ECO:0000314"/>
    <property type="project" value="HPA"/>
</dbReference>
<dbReference type="GO" id="GO:0005938">
    <property type="term" value="C:cell cortex"/>
    <property type="evidence" value="ECO:0007669"/>
    <property type="project" value="UniProtKB-SubCell"/>
</dbReference>
<dbReference type="GO" id="GO:0005813">
    <property type="term" value="C:centrosome"/>
    <property type="evidence" value="ECO:0000314"/>
    <property type="project" value="UniProtKB"/>
</dbReference>
<dbReference type="GO" id="GO:0000785">
    <property type="term" value="C:chromatin"/>
    <property type="evidence" value="ECO:0000314"/>
    <property type="project" value="UniProtKB"/>
</dbReference>
<dbReference type="GO" id="GO:0005737">
    <property type="term" value="C:cytoplasm"/>
    <property type="evidence" value="ECO:0000314"/>
    <property type="project" value="UniProtKB"/>
</dbReference>
<dbReference type="GO" id="GO:0005829">
    <property type="term" value="C:cytosol"/>
    <property type="evidence" value="ECO:0000314"/>
    <property type="project" value="HPA"/>
</dbReference>
<dbReference type="GO" id="GO:0005925">
    <property type="term" value="C:focal adhesion"/>
    <property type="evidence" value="ECO:0000314"/>
    <property type="project" value="ARUK-UCL"/>
</dbReference>
<dbReference type="GO" id="GO:0030027">
    <property type="term" value="C:lamellipodium"/>
    <property type="evidence" value="ECO:0007669"/>
    <property type="project" value="UniProtKB-SubCell"/>
</dbReference>
<dbReference type="GO" id="GO:0016020">
    <property type="term" value="C:membrane"/>
    <property type="evidence" value="ECO:0007005"/>
    <property type="project" value="UniProtKB"/>
</dbReference>
<dbReference type="GO" id="GO:0005654">
    <property type="term" value="C:nucleoplasm"/>
    <property type="evidence" value="ECO:0000314"/>
    <property type="project" value="HPA"/>
</dbReference>
<dbReference type="GO" id="GO:0005634">
    <property type="term" value="C:nucleus"/>
    <property type="evidence" value="ECO:0000314"/>
    <property type="project" value="UniProtKB"/>
</dbReference>
<dbReference type="GO" id="GO:0005886">
    <property type="term" value="C:plasma membrane"/>
    <property type="evidence" value="ECO:0007669"/>
    <property type="project" value="UniProtKB-SubCell"/>
</dbReference>
<dbReference type="GO" id="GO:0030017">
    <property type="term" value="C:sarcomere"/>
    <property type="evidence" value="ECO:0007669"/>
    <property type="project" value="UniProtKB-SubCell"/>
</dbReference>
<dbReference type="GO" id="GO:0005524">
    <property type="term" value="F:ATP binding"/>
    <property type="evidence" value="ECO:0000314"/>
    <property type="project" value="UniProtKB"/>
</dbReference>
<dbReference type="GO" id="GO:0005178">
    <property type="term" value="F:integrin binding"/>
    <property type="evidence" value="ECO:0000314"/>
    <property type="project" value="UniProtKB"/>
</dbReference>
<dbReference type="GO" id="GO:0000287">
    <property type="term" value="F:magnesium ion binding"/>
    <property type="evidence" value="ECO:0000314"/>
    <property type="project" value="UniProtKB"/>
</dbReference>
<dbReference type="GO" id="GO:0004672">
    <property type="term" value="F:protein kinase activity"/>
    <property type="evidence" value="ECO:0007669"/>
    <property type="project" value="InterPro"/>
</dbReference>
<dbReference type="GO" id="GO:0019901">
    <property type="term" value="F:protein kinase binding"/>
    <property type="evidence" value="ECO:0000353"/>
    <property type="project" value="UniProtKB"/>
</dbReference>
<dbReference type="GO" id="GO:0030674">
    <property type="term" value="F:protein-macromolecule adaptor activity"/>
    <property type="evidence" value="ECO:0000318"/>
    <property type="project" value="GO_Central"/>
</dbReference>
<dbReference type="GO" id="GO:0005102">
    <property type="term" value="F:signaling receptor binding"/>
    <property type="evidence" value="ECO:0000318"/>
    <property type="project" value="GO_Central"/>
</dbReference>
<dbReference type="GO" id="GO:0001658">
    <property type="term" value="P:branching involved in ureteric bud morphogenesis"/>
    <property type="evidence" value="ECO:0007669"/>
    <property type="project" value="Ensembl"/>
</dbReference>
<dbReference type="GO" id="GO:0070836">
    <property type="term" value="P:caveola assembly"/>
    <property type="evidence" value="ECO:0007669"/>
    <property type="project" value="Ensembl"/>
</dbReference>
<dbReference type="GO" id="GO:0030154">
    <property type="term" value="P:cell differentiation"/>
    <property type="evidence" value="ECO:0000318"/>
    <property type="project" value="GO_Central"/>
</dbReference>
<dbReference type="GO" id="GO:0000902">
    <property type="term" value="P:cell morphogenesis"/>
    <property type="evidence" value="ECO:0000315"/>
    <property type="project" value="ARUK-UCL"/>
</dbReference>
<dbReference type="GO" id="GO:0030030">
    <property type="term" value="P:cell projection organization"/>
    <property type="evidence" value="ECO:0007669"/>
    <property type="project" value="Ensembl"/>
</dbReference>
<dbReference type="GO" id="GO:0007160">
    <property type="term" value="P:cell-matrix adhesion"/>
    <property type="evidence" value="ECO:0000318"/>
    <property type="project" value="GO_Central"/>
</dbReference>
<dbReference type="GO" id="GO:0045197">
    <property type="term" value="P:establishment or maintenance of epithelial cell apical/basal polarity"/>
    <property type="evidence" value="ECO:0007669"/>
    <property type="project" value="Ensembl"/>
</dbReference>
<dbReference type="GO" id="GO:0010761">
    <property type="term" value="P:fibroblast migration"/>
    <property type="evidence" value="ECO:0007669"/>
    <property type="project" value="Ensembl"/>
</dbReference>
<dbReference type="GO" id="GO:0007229">
    <property type="term" value="P:integrin-mediated signaling pathway"/>
    <property type="evidence" value="ECO:0000314"/>
    <property type="project" value="MGI"/>
</dbReference>
<dbReference type="GO" id="GO:0007052">
    <property type="term" value="P:mitotic spindle organization"/>
    <property type="evidence" value="ECO:0000315"/>
    <property type="project" value="UniProtKB"/>
</dbReference>
<dbReference type="GO" id="GO:0022011">
    <property type="term" value="P:myelination in peripheral nervous system"/>
    <property type="evidence" value="ECO:0007669"/>
    <property type="project" value="Ensembl"/>
</dbReference>
<dbReference type="GO" id="GO:2000178">
    <property type="term" value="P:negative regulation of neural precursor cell proliferation"/>
    <property type="evidence" value="ECO:0007669"/>
    <property type="project" value="Ensembl"/>
</dbReference>
<dbReference type="GO" id="GO:0021675">
    <property type="term" value="P:nerve development"/>
    <property type="evidence" value="ECO:0007669"/>
    <property type="project" value="Ensembl"/>
</dbReference>
<dbReference type="GO" id="GO:0061351">
    <property type="term" value="P:neural precursor cell proliferation"/>
    <property type="evidence" value="ECO:0007669"/>
    <property type="project" value="Ensembl"/>
</dbReference>
<dbReference type="GO" id="GO:0003151">
    <property type="term" value="P:outflow tract morphogenesis"/>
    <property type="evidence" value="ECO:0007669"/>
    <property type="project" value="Ensembl"/>
</dbReference>
<dbReference type="GO" id="GO:0043491">
    <property type="term" value="P:phosphatidylinositol 3-kinase/protein kinase B signal transduction"/>
    <property type="evidence" value="ECO:0007669"/>
    <property type="project" value="Ensembl"/>
</dbReference>
<dbReference type="GO" id="GO:0070527">
    <property type="term" value="P:platelet aggregation"/>
    <property type="evidence" value="ECO:0007001"/>
    <property type="project" value="UniProtKB"/>
</dbReference>
<dbReference type="GO" id="GO:0030513">
    <property type="term" value="P:positive regulation of BMP signaling pathway"/>
    <property type="evidence" value="ECO:0007669"/>
    <property type="project" value="Ensembl"/>
</dbReference>
<dbReference type="GO" id="GO:0043123">
    <property type="term" value="P:positive regulation of canonical NF-kappaB signal transduction"/>
    <property type="evidence" value="ECO:0000315"/>
    <property type="project" value="CAFA"/>
</dbReference>
<dbReference type="GO" id="GO:0090263">
    <property type="term" value="P:positive regulation of canonical Wnt signaling pathway"/>
    <property type="evidence" value="ECO:0000315"/>
    <property type="project" value="UniProtKB"/>
</dbReference>
<dbReference type="GO" id="GO:0008284">
    <property type="term" value="P:positive regulation of cell population proliferation"/>
    <property type="evidence" value="ECO:0007669"/>
    <property type="project" value="Ensembl"/>
</dbReference>
<dbReference type="GO" id="GO:0045893">
    <property type="term" value="P:positive regulation of DNA-templated transcription"/>
    <property type="evidence" value="ECO:0000315"/>
    <property type="project" value="UniProtKB"/>
</dbReference>
<dbReference type="GO" id="GO:0045669">
    <property type="term" value="P:positive regulation of osteoblast differentiation"/>
    <property type="evidence" value="ECO:0007669"/>
    <property type="project" value="Ensembl"/>
</dbReference>
<dbReference type="GO" id="GO:0009967">
    <property type="term" value="P:positive regulation of signal transduction"/>
    <property type="evidence" value="ECO:0000315"/>
    <property type="project" value="UniProtKB"/>
</dbReference>
<dbReference type="GO" id="GO:1900026">
    <property type="term" value="P:positive regulation of substrate adhesion-dependent cell spreading"/>
    <property type="evidence" value="ECO:0000316"/>
    <property type="project" value="ARUK-UCL"/>
</dbReference>
<dbReference type="GO" id="GO:0072697">
    <property type="term" value="P:protein localization to cell cortex"/>
    <property type="evidence" value="ECO:0007669"/>
    <property type="project" value="Ensembl"/>
</dbReference>
<dbReference type="GO" id="GO:0034446">
    <property type="term" value="P:substrate adhesion-dependent cell spreading"/>
    <property type="evidence" value="ECO:0000315"/>
    <property type="project" value="UniProtKB"/>
</dbReference>
<dbReference type="GO" id="GO:0033209">
    <property type="term" value="P:tumor necrosis factor-mediated signaling pathway"/>
    <property type="evidence" value="ECO:0000315"/>
    <property type="project" value="CAFA"/>
</dbReference>
<dbReference type="CDD" id="cd14057">
    <property type="entry name" value="PK_ILK"/>
    <property type="match status" value="1"/>
</dbReference>
<dbReference type="FunFam" id="3.30.200.20:FF:000245">
    <property type="entry name" value="Integrin-linked protein kinase"/>
    <property type="match status" value="1"/>
</dbReference>
<dbReference type="FunFam" id="1.10.510.10:FF:000187">
    <property type="entry name" value="integrin-linked protein kinase"/>
    <property type="match status" value="1"/>
</dbReference>
<dbReference type="FunFam" id="1.25.40.20:FF:000050">
    <property type="entry name" value="integrin-linked protein kinase"/>
    <property type="match status" value="1"/>
</dbReference>
<dbReference type="Gene3D" id="1.25.40.20">
    <property type="entry name" value="Ankyrin repeat-containing domain"/>
    <property type="match status" value="1"/>
</dbReference>
<dbReference type="Gene3D" id="3.30.200.20">
    <property type="entry name" value="Phosphorylase Kinase, domain 1"/>
    <property type="match status" value="1"/>
</dbReference>
<dbReference type="Gene3D" id="1.10.510.10">
    <property type="entry name" value="Transferase(Phosphotransferase) domain 1"/>
    <property type="match status" value="1"/>
</dbReference>
<dbReference type="InterPro" id="IPR002110">
    <property type="entry name" value="Ankyrin_rpt"/>
</dbReference>
<dbReference type="InterPro" id="IPR036770">
    <property type="entry name" value="Ankyrin_rpt-contain_sf"/>
</dbReference>
<dbReference type="InterPro" id="IPR011009">
    <property type="entry name" value="Kinase-like_dom_sf"/>
</dbReference>
<dbReference type="InterPro" id="IPR035692">
    <property type="entry name" value="PK_ILK"/>
</dbReference>
<dbReference type="InterPro" id="IPR000719">
    <property type="entry name" value="Prot_kinase_dom"/>
</dbReference>
<dbReference type="InterPro" id="IPR001245">
    <property type="entry name" value="Ser-Thr/Tyr_kinase_cat_dom"/>
</dbReference>
<dbReference type="InterPro" id="IPR051681">
    <property type="entry name" value="Ser/Thr_Kinases-Pseudokinases"/>
</dbReference>
<dbReference type="PANTHER" id="PTHR44329:SF57">
    <property type="entry name" value="INTEGRIN-LINKED PROTEIN KINASE"/>
    <property type="match status" value="1"/>
</dbReference>
<dbReference type="PANTHER" id="PTHR44329">
    <property type="entry name" value="SERINE/THREONINE-PROTEIN KINASE TNNI3K-RELATED"/>
    <property type="match status" value="1"/>
</dbReference>
<dbReference type="Pfam" id="PF12796">
    <property type="entry name" value="Ank_2"/>
    <property type="match status" value="2"/>
</dbReference>
<dbReference type="Pfam" id="PF07714">
    <property type="entry name" value="PK_Tyr_Ser-Thr"/>
    <property type="match status" value="1"/>
</dbReference>
<dbReference type="PIRSF" id="PIRSF000654">
    <property type="entry name" value="Integrin-linked_kinase"/>
    <property type="match status" value="1"/>
</dbReference>
<dbReference type="SMART" id="SM00248">
    <property type="entry name" value="ANK"/>
    <property type="match status" value="3"/>
</dbReference>
<dbReference type="SUPFAM" id="SSF48403">
    <property type="entry name" value="Ankyrin repeat"/>
    <property type="match status" value="1"/>
</dbReference>
<dbReference type="SUPFAM" id="SSF56112">
    <property type="entry name" value="Protein kinase-like (PK-like)"/>
    <property type="match status" value="1"/>
</dbReference>
<dbReference type="PROSITE" id="PS50297">
    <property type="entry name" value="ANK_REP_REGION"/>
    <property type="match status" value="1"/>
</dbReference>
<dbReference type="PROSITE" id="PS50088">
    <property type="entry name" value="ANK_REPEAT"/>
    <property type="match status" value="3"/>
</dbReference>
<dbReference type="PROSITE" id="PS50011">
    <property type="entry name" value="PROTEIN_KINASE_DOM"/>
    <property type="match status" value="1"/>
</dbReference>
<accession>Q13418</accession>
<accession>B7Z1I0</accession>
<accession>B7Z418</accession>
<accession>D3DQU0</accession>
<accession>P57043</accession>
<accession>Q68DZ3</accession>
<proteinExistence type="evidence at protein level"/>
<keyword id="KW-0002">3D-structure</keyword>
<keyword id="KW-0007">Acetylation</keyword>
<keyword id="KW-0025">Alternative splicing</keyword>
<keyword id="KW-0040">ANK repeat</keyword>
<keyword id="KW-0067">ATP-binding</keyword>
<keyword id="KW-0965">Cell junction</keyword>
<keyword id="KW-1003">Cell membrane</keyword>
<keyword id="KW-0966">Cell projection</keyword>
<keyword id="KW-0963">Cytoplasm</keyword>
<keyword id="KW-0206">Cytoskeleton</keyword>
<keyword id="KW-0460">Magnesium</keyword>
<keyword id="KW-0472">Membrane</keyword>
<keyword id="KW-0479">Metal-binding</keyword>
<keyword id="KW-0547">Nucleotide-binding</keyword>
<keyword id="KW-0539">Nucleus</keyword>
<keyword id="KW-0597">Phosphoprotein</keyword>
<keyword id="KW-1267">Proteomics identification</keyword>
<keyword id="KW-1185">Reference proteome</keyword>
<keyword id="KW-0677">Repeat</keyword>
<reference key="1">
    <citation type="journal article" date="1996" name="Nature">
        <title>Regulation of cell adhesion and anchorage-dependent growth by a new beta 1-integrin-linked protein kinase.</title>
        <authorList>
            <person name="Hannigan G.E."/>
            <person name="Leung-Hagesteijn C."/>
            <person name="Fitz-Gibbon L."/>
            <person name="Coppolino M.G."/>
            <person name="Radeva G."/>
            <person name="Filmus J."/>
            <person name="Bell J.C."/>
            <person name="Dedhar S."/>
        </authorList>
    </citation>
    <scope>NUCLEOTIDE SEQUENCE [MRNA] (ISOFORM 1)</scope>
    <scope>INTERACTION WITH ITGB1</scope>
    <source>
        <tissue>Placenta</tissue>
    </source>
</reference>
<reference key="2">
    <citation type="journal article" date="2000" name="Oncogene">
        <title>Cloning of an isoform of integrin-linked kinase (ILK) that is upregulated in HT-144 melanoma cells following TGF-beta1 stimulation.</title>
        <authorList>
            <person name="Janji B."/>
            <person name="Melchior C."/>
            <person name="Vallar L."/>
            <person name="Kieffer N."/>
        </authorList>
    </citation>
    <scope>NUCLEOTIDE SEQUENCE [MRNA] (ISOFORM 1)</scope>
</reference>
<reference key="3">
    <citation type="submission" date="2000-03" db="EMBL/GenBank/DDBJ databases">
        <title>Integrin-linked kinase genomic sequence.</title>
        <authorList>
            <person name="Tadic B."/>
            <person name="Hannigan G.E."/>
        </authorList>
    </citation>
    <scope>NUCLEOTIDE SEQUENCE [GENOMIC DNA]</scope>
</reference>
<reference key="4">
    <citation type="submission" date="2000-07" db="EMBL/GenBank/DDBJ databases">
        <title>Structural organisation of the gene encoding integrin-linked kinase 1.</title>
        <authorList>
            <person name="Melchior C."/>
            <person name="Janji B."/>
            <person name="Kreis S."/>
            <person name="Kieffer N."/>
        </authorList>
    </citation>
    <scope>NUCLEOTIDE SEQUENCE [GENOMIC DNA]</scope>
</reference>
<reference key="5">
    <citation type="journal article" date="2004" name="Nat. Genet.">
        <title>Complete sequencing and characterization of 21,243 full-length human cDNAs.</title>
        <authorList>
            <person name="Ota T."/>
            <person name="Suzuki Y."/>
            <person name="Nishikawa T."/>
            <person name="Otsuki T."/>
            <person name="Sugiyama T."/>
            <person name="Irie R."/>
            <person name="Wakamatsu A."/>
            <person name="Hayashi K."/>
            <person name="Sato H."/>
            <person name="Nagai K."/>
            <person name="Kimura K."/>
            <person name="Makita H."/>
            <person name="Sekine M."/>
            <person name="Obayashi M."/>
            <person name="Nishi T."/>
            <person name="Shibahara T."/>
            <person name="Tanaka T."/>
            <person name="Ishii S."/>
            <person name="Yamamoto J."/>
            <person name="Saito K."/>
            <person name="Kawai Y."/>
            <person name="Isono Y."/>
            <person name="Nakamura Y."/>
            <person name="Nagahari K."/>
            <person name="Murakami K."/>
            <person name="Yasuda T."/>
            <person name="Iwayanagi T."/>
            <person name="Wagatsuma M."/>
            <person name="Shiratori A."/>
            <person name="Sudo H."/>
            <person name="Hosoiri T."/>
            <person name="Kaku Y."/>
            <person name="Kodaira H."/>
            <person name="Kondo H."/>
            <person name="Sugawara M."/>
            <person name="Takahashi M."/>
            <person name="Kanda K."/>
            <person name="Yokoi T."/>
            <person name="Furuya T."/>
            <person name="Kikkawa E."/>
            <person name="Omura Y."/>
            <person name="Abe K."/>
            <person name="Kamihara K."/>
            <person name="Katsuta N."/>
            <person name="Sato K."/>
            <person name="Tanikawa M."/>
            <person name="Yamazaki M."/>
            <person name="Ninomiya K."/>
            <person name="Ishibashi T."/>
            <person name="Yamashita H."/>
            <person name="Murakawa K."/>
            <person name="Fujimori K."/>
            <person name="Tanai H."/>
            <person name="Kimata M."/>
            <person name="Watanabe M."/>
            <person name="Hiraoka S."/>
            <person name="Chiba Y."/>
            <person name="Ishida S."/>
            <person name="Ono Y."/>
            <person name="Takiguchi S."/>
            <person name="Watanabe S."/>
            <person name="Yosida M."/>
            <person name="Hotuta T."/>
            <person name="Kusano J."/>
            <person name="Kanehori K."/>
            <person name="Takahashi-Fujii A."/>
            <person name="Hara H."/>
            <person name="Tanase T.-O."/>
            <person name="Nomura Y."/>
            <person name="Togiya S."/>
            <person name="Komai F."/>
            <person name="Hara R."/>
            <person name="Takeuchi K."/>
            <person name="Arita M."/>
            <person name="Imose N."/>
            <person name="Musashino K."/>
            <person name="Yuuki H."/>
            <person name="Oshima A."/>
            <person name="Sasaki N."/>
            <person name="Aotsuka S."/>
            <person name="Yoshikawa Y."/>
            <person name="Matsunawa H."/>
            <person name="Ichihara T."/>
            <person name="Shiohata N."/>
            <person name="Sano S."/>
            <person name="Moriya S."/>
            <person name="Momiyama H."/>
            <person name="Satoh N."/>
            <person name="Takami S."/>
            <person name="Terashima Y."/>
            <person name="Suzuki O."/>
            <person name="Nakagawa S."/>
            <person name="Senoh A."/>
            <person name="Mizoguchi H."/>
            <person name="Goto Y."/>
            <person name="Shimizu F."/>
            <person name="Wakebe H."/>
            <person name="Hishigaki H."/>
            <person name="Watanabe T."/>
            <person name="Sugiyama A."/>
            <person name="Takemoto M."/>
            <person name="Kawakami B."/>
            <person name="Yamazaki M."/>
            <person name="Watanabe K."/>
            <person name="Kumagai A."/>
            <person name="Itakura S."/>
            <person name="Fukuzumi Y."/>
            <person name="Fujimori Y."/>
            <person name="Komiyama M."/>
            <person name="Tashiro H."/>
            <person name="Tanigami A."/>
            <person name="Fujiwara T."/>
            <person name="Ono T."/>
            <person name="Yamada K."/>
            <person name="Fujii Y."/>
            <person name="Ozaki K."/>
            <person name="Hirao M."/>
            <person name="Ohmori Y."/>
            <person name="Kawabata A."/>
            <person name="Hikiji T."/>
            <person name="Kobatake N."/>
            <person name="Inagaki H."/>
            <person name="Ikema Y."/>
            <person name="Okamoto S."/>
            <person name="Okitani R."/>
            <person name="Kawakami T."/>
            <person name="Noguchi S."/>
            <person name="Itoh T."/>
            <person name="Shigeta K."/>
            <person name="Senba T."/>
            <person name="Matsumura K."/>
            <person name="Nakajima Y."/>
            <person name="Mizuno T."/>
            <person name="Morinaga M."/>
            <person name="Sasaki M."/>
            <person name="Togashi T."/>
            <person name="Oyama M."/>
            <person name="Hata H."/>
            <person name="Watanabe M."/>
            <person name="Komatsu T."/>
            <person name="Mizushima-Sugano J."/>
            <person name="Satoh T."/>
            <person name="Shirai Y."/>
            <person name="Takahashi Y."/>
            <person name="Nakagawa K."/>
            <person name="Okumura K."/>
            <person name="Nagase T."/>
            <person name="Nomura N."/>
            <person name="Kikuchi H."/>
            <person name="Masuho Y."/>
            <person name="Yamashita R."/>
            <person name="Nakai K."/>
            <person name="Yada T."/>
            <person name="Nakamura Y."/>
            <person name="Ohara O."/>
            <person name="Isogai T."/>
            <person name="Sugano S."/>
        </authorList>
    </citation>
    <scope>NUCLEOTIDE SEQUENCE [LARGE SCALE MRNA] (ISOFORMS 2 AND 3)</scope>
    <source>
        <tissue>Cerebellum</tissue>
        <tissue>Colon</tissue>
    </source>
</reference>
<reference key="6">
    <citation type="submission" date="2004-05" db="EMBL/GenBank/DDBJ databases">
        <title>Cloning of human full open reading frames in Gateway(TM) system entry vector (pDONR201).</title>
        <authorList>
            <person name="Ebert L."/>
            <person name="Schick M."/>
            <person name="Neubert P."/>
            <person name="Schatten R."/>
            <person name="Henze S."/>
            <person name="Korn B."/>
        </authorList>
    </citation>
    <scope>NUCLEOTIDE SEQUENCE [LARGE SCALE MRNA] (ISOFORM 1)</scope>
</reference>
<reference key="7">
    <citation type="journal article" date="2007" name="BMC Genomics">
        <title>The full-ORF clone resource of the German cDNA consortium.</title>
        <authorList>
            <person name="Bechtel S."/>
            <person name="Rosenfelder H."/>
            <person name="Duda A."/>
            <person name="Schmidt C.P."/>
            <person name="Ernst U."/>
            <person name="Wellenreuther R."/>
            <person name="Mehrle A."/>
            <person name="Schuster C."/>
            <person name="Bahr A."/>
            <person name="Bloecker H."/>
            <person name="Heubner D."/>
            <person name="Hoerlein A."/>
            <person name="Michel G."/>
            <person name="Wedler H."/>
            <person name="Koehrer K."/>
            <person name="Ottenwaelder B."/>
            <person name="Poustka A."/>
            <person name="Wiemann S."/>
            <person name="Schupp I."/>
        </authorList>
    </citation>
    <scope>NUCLEOTIDE SEQUENCE [LARGE SCALE MRNA] (ISOFORM 1)</scope>
    <source>
        <tissue>Endometrium</tissue>
    </source>
</reference>
<reference key="8">
    <citation type="journal article" date="2006" name="Nature">
        <title>Human chromosome 11 DNA sequence and analysis including novel gene identification.</title>
        <authorList>
            <person name="Taylor T.D."/>
            <person name="Noguchi H."/>
            <person name="Totoki Y."/>
            <person name="Toyoda A."/>
            <person name="Kuroki Y."/>
            <person name="Dewar K."/>
            <person name="Lloyd C."/>
            <person name="Itoh T."/>
            <person name="Takeda T."/>
            <person name="Kim D.-W."/>
            <person name="She X."/>
            <person name="Barlow K.F."/>
            <person name="Bloom T."/>
            <person name="Bruford E."/>
            <person name="Chang J.L."/>
            <person name="Cuomo C.A."/>
            <person name="Eichler E."/>
            <person name="FitzGerald M.G."/>
            <person name="Jaffe D.B."/>
            <person name="LaButti K."/>
            <person name="Nicol R."/>
            <person name="Park H.-S."/>
            <person name="Seaman C."/>
            <person name="Sougnez C."/>
            <person name="Yang X."/>
            <person name="Zimmer A.R."/>
            <person name="Zody M.C."/>
            <person name="Birren B.W."/>
            <person name="Nusbaum C."/>
            <person name="Fujiyama A."/>
            <person name="Hattori M."/>
            <person name="Rogers J."/>
            <person name="Lander E.S."/>
            <person name="Sakaki Y."/>
        </authorList>
    </citation>
    <scope>NUCLEOTIDE SEQUENCE [LARGE SCALE GENOMIC DNA]</scope>
</reference>
<reference key="9">
    <citation type="submission" date="2005-09" db="EMBL/GenBank/DDBJ databases">
        <authorList>
            <person name="Mural R.J."/>
            <person name="Istrail S."/>
            <person name="Sutton G.G."/>
            <person name="Florea L."/>
            <person name="Halpern A.L."/>
            <person name="Mobarry C.M."/>
            <person name="Lippert R."/>
            <person name="Walenz B."/>
            <person name="Shatkay H."/>
            <person name="Dew I."/>
            <person name="Miller J.R."/>
            <person name="Flanigan M.J."/>
            <person name="Edwards N.J."/>
            <person name="Bolanos R."/>
            <person name="Fasulo D."/>
            <person name="Halldorsson B.V."/>
            <person name="Hannenhalli S."/>
            <person name="Turner R."/>
            <person name="Yooseph S."/>
            <person name="Lu F."/>
            <person name="Nusskern D.R."/>
            <person name="Shue B.C."/>
            <person name="Zheng X.H."/>
            <person name="Zhong F."/>
            <person name="Delcher A.L."/>
            <person name="Huson D.H."/>
            <person name="Kravitz S.A."/>
            <person name="Mouchard L."/>
            <person name="Reinert K."/>
            <person name="Remington K.A."/>
            <person name="Clark A.G."/>
            <person name="Waterman M.S."/>
            <person name="Eichler E.E."/>
            <person name="Adams M.D."/>
            <person name="Hunkapiller M.W."/>
            <person name="Myers E.W."/>
            <person name="Venter J.C."/>
        </authorList>
    </citation>
    <scope>NUCLEOTIDE SEQUENCE [LARGE SCALE GENOMIC DNA]</scope>
</reference>
<reference key="10">
    <citation type="journal article" date="2004" name="Genome Res.">
        <title>The status, quality, and expansion of the NIH full-length cDNA project: the Mammalian Gene Collection (MGC).</title>
        <authorList>
            <consortium name="The MGC Project Team"/>
        </authorList>
    </citation>
    <scope>NUCLEOTIDE SEQUENCE [LARGE SCALE MRNA] (ISOFORM 1)</scope>
    <source>
        <tissue>Cervix</tissue>
    </source>
</reference>
<reference key="11">
    <citation type="journal article" date="1998" name="Proc. Natl. Acad. Sci. U.S.A.">
        <title>Phosphoinositide-3-OH kinase-dependent regulation of glycogen synthase kinase 3 and protein kinase B/AKT by the integrin-linked kinase.</title>
        <authorList>
            <person name="Delcommenne M."/>
            <person name="Tan C."/>
            <person name="Gray V."/>
            <person name="Rue L."/>
            <person name="Woodgett J.R."/>
            <person name="Dedhar S."/>
        </authorList>
    </citation>
    <scope>FUNCTION</scope>
</reference>
<reference key="12">
    <citation type="journal article" date="2000" name="Curr. Opin. Cell Biol.">
        <title>Cell-substrate interactions and signaling through ILK.</title>
        <authorList>
            <person name="Dedhar S."/>
        </authorList>
    </citation>
    <scope>REVIEW</scope>
</reference>
<reference key="13">
    <citation type="journal article" date="2001" name="J. Cell Biol.">
        <title>A new focal adhesion protein that interacts with integrin-linked kinase and regulates cell adhesion and spreading.</title>
        <authorList>
            <person name="Tu Y."/>
            <person name="Huang Y."/>
            <person name="Zhang Y."/>
            <person name="Hua Y."/>
            <person name="Wu C."/>
        </authorList>
    </citation>
    <scope>IDENTIFICATION IN IPP COMPLEX</scope>
</reference>
<reference key="14">
    <citation type="journal article" date="2001" name="J. Cell Biol.">
        <title>A novel integrin-linked kinase-binding protein, affixin, is involved in the early stage of cell-substrate interaction.</title>
        <authorList>
            <person name="Yamaji S."/>
            <person name="Suzuki A."/>
            <person name="Sugiyama Y."/>
            <person name="Koide Y."/>
            <person name="Yoshida M."/>
            <person name="Kanamori H."/>
            <person name="Mohri H."/>
            <person name="Ohno S."/>
            <person name="Ishigatsubo Y."/>
        </authorList>
    </citation>
    <scope>INTERACTION WITH PARVB</scope>
    <scope>SUBCELLULAR LOCATION</scope>
</reference>
<reference key="15">
    <citation type="journal article" date="2002" name="J. Biol. Chem.">
        <title>Characterization of PINCH-2, a new focal adhesion protein that regulates the PINCH-1-ILK interaction, cell spreading, and migration.</title>
        <authorList>
            <person name="Zhang Y."/>
            <person name="Chen K."/>
            <person name="Guo L."/>
            <person name="Wu C."/>
        </authorList>
    </citation>
    <scope>SUBCELLULAR LOCATION</scope>
    <scope>INTERACTION WITH LIMS1 AND LIMS2</scope>
</reference>
<reference key="16">
    <citation type="journal article" date="2002" name="J. Cell Sci.">
        <title>Assembly of the PINCH-ILK-CH-ILKBP complex precedes and is essential for localization of each component to cell-matrix adhesion sites.</title>
        <authorList>
            <person name="Zhang Y."/>
            <person name="Chen K."/>
            <person name="Tu Y."/>
            <person name="Velyvis A."/>
            <person name="Yang Y."/>
            <person name="Qin J."/>
            <person name="Wu C."/>
        </authorList>
    </citation>
    <scope>IDENTIFICATION IN IPP COMPLEX</scope>
    <scope>SUBCELLULAR LOCATION</scope>
    <scope>ROLE OF PH-LIKE REGION</scope>
    <scope>MUTAGENESIS OF ASP-31</scope>
</reference>
<reference key="17">
    <citation type="journal article" date="2004" name="J. Biol. Chem.">
        <title>Distinct roles of two structurally closely related focal adhesion proteins, alpha-parvins and beta-parvins, in regulation of cell morphology and survival.</title>
        <authorList>
            <person name="Zhang Y."/>
            <person name="Chen K."/>
            <person name="Tu Y."/>
            <person name="Wu C."/>
        </authorList>
    </citation>
    <scope>INTERACTION WITH PARVA AND PARVB</scope>
</reference>
<reference key="18">
    <citation type="journal article" date="2005" name="J. Biol. Chem.">
        <title>Actopaxin interacts with TESK1 to regulate cell spreading on fibronectin.</title>
        <authorList>
            <person name="LaLonde D.P."/>
            <person name="Brown M.C."/>
            <person name="Bouverat B.P."/>
            <person name="Turner C.E."/>
        </authorList>
    </citation>
    <scope>INTERACTION WITH PARVA AND PXN</scope>
</reference>
<reference key="19">
    <citation type="journal article" date="2006" name="J. Immunol.">
        <title>The gamma-parvin-integrin-linked kinase complex is critically involved in leukocyte-substrate interaction.</title>
        <authorList>
            <person name="Yoshimi R."/>
            <person name="Yamaji S."/>
            <person name="Suzuki A."/>
            <person name="Mishima W."/>
            <person name="Okamura M."/>
            <person name="Obana T."/>
            <person name="Matsuda C."/>
            <person name="Miwa Y."/>
            <person name="Ohno S."/>
            <person name="Ishigatsubo Y."/>
        </authorList>
    </citation>
    <scope>FUNCTION</scope>
    <scope>INTERACTION WITH PARVG</scope>
</reference>
<reference key="20">
    <citation type="journal article" date="2007" name="Proc. Natl. Acad. Sci. U.S.A.">
        <title>Phosphorylation-dependent regulation of nuclear localization and functions of integrin-linked kinase.</title>
        <authorList>
            <person name="Acconcia F."/>
            <person name="Barnes C.J."/>
            <person name="Singh R.R."/>
            <person name="Talukder A.H."/>
            <person name="Kumar R."/>
        </authorList>
    </citation>
    <scope>FUNCTION</scope>
    <scope>SUBCELLULAR LOCATION</scope>
    <scope>PHOSPHORYLATION AT THR-173 AND SER-246</scope>
    <scope>MUTAGENESIS OF THR-173; THR-181; SER-228; SER-246; LYS-363 AND ILE-400</scope>
</reference>
<reference key="21">
    <citation type="journal article" date="2008" name="J. Cell Biol.">
        <title>Integrin-linked kinase localizes to the centrosome and regulates mitotic spindle organization.</title>
        <authorList>
            <person name="Fielding A.B."/>
            <person name="Dobreva I."/>
            <person name="McDonald P.C."/>
            <person name="Foster L.J."/>
            <person name="Dedhar S."/>
        </authorList>
    </citation>
    <scope>FUNCTION</scope>
    <scope>SUBCELLULAR LOCATION</scope>
</reference>
<reference key="22">
    <citation type="journal article" date="2009" name="J. Cell Sci.">
        <title>EphA1 interacts with integrin-linked kinase and regulates cell morphology and motility.</title>
        <authorList>
            <person name="Yamazaki T."/>
            <person name="Masuda J."/>
            <person name="Omori T."/>
            <person name="Usui R."/>
            <person name="Akiyama H."/>
            <person name="Maru Y."/>
        </authorList>
    </citation>
    <scope>INTERACTION WITH EPHA1</scope>
</reference>
<reference key="23">
    <citation type="journal article" date="2011" name="BMC Syst. Biol.">
        <title>Initial characterization of the human central proteome.</title>
        <authorList>
            <person name="Burkard T.R."/>
            <person name="Planyavsky M."/>
            <person name="Kaupe I."/>
            <person name="Breitwieser F.P."/>
            <person name="Buerckstuemmer T."/>
            <person name="Bennett K.L."/>
            <person name="Superti-Furga G."/>
            <person name="Colinge J."/>
        </authorList>
    </citation>
    <scope>IDENTIFICATION BY MASS SPECTROMETRY [LARGE SCALE ANALYSIS]</scope>
</reference>
<reference key="24">
    <citation type="journal article" date="2011" name="Sci. Signal.">
        <title>System-wide temporal characterization of the proteome and phosphoproteome of human embryonic stem cell differentiation.</title>
        <authorList>
            <person name="Rigbolt K.T."/>
            <person name="Prokhorova T.A."/>
            <person name="Akimov V."/>
            <person name="Henningsen J."/>
            <person name="Johansen P.T."/>
            <person name="Kratchmarova I."/>
            <person name="Kassem M."/>
            <person name="Mann M."/>
            <person name="Olsen J.V."/>
            <person name="Blagoev B."/>
        </authorList>
    </citation>
    <scope>PHOSPHORYLATION [LARGE SCALE ANALYSIS] AT SER-186</scope>
    <scope>IDENTIFICATION BY MASS SPECTROMETRY [LARGE SCALE ANALYSIS]</scope>
</reference>
<reference key="25">
    <citation type="journal article" date="2012" name="Mol. Cell. Proteomics">
        <title>Comparative large-scale characterisation of plant vs. mammal proteins reveals similar and idiosyncratic N-alpha acetylation features.</title>
        <authorList>
            <person name="Bienvenut W.V."/>
            <person name="Sumpton D."/>
            <person name="Martinez A."/>
            <person name="Lilla S."/>
            <person name="Espagne C."/>
            <person name="Meinnel T."/>
            <person name="Giglione C."/>
        </authorList>
    </citation>
    <scope>ACETYLATION [LARGE SCALE ANALYSIS] AT MET-1</scope>
    <scope>IDENTIFICATION BY MASS SPECTROMETRY [LARGE SCALE ANALYSIS]</scope>
</reference>
<reference key="26">
    <citation type="journal article" date="2012" name="Proc. Natl. Acad. Sci. U.S.A.">
        <title>N-terminal acetylome analyses and functional insights of the N-terminal acetyltransferase NatB.</title>
        <authorList>
            <person name="Van Damme P."/>
            <person name="Lasa M."/>
            <person name="Polevoda B."/>
            <person name="Gazquez C."/>
            <person name="Elosegui-Artola A."/>
            <person name="Kim D.S."/>
            <person name="De Juan-Pardo E."/>
            <person name="Demeyer K."/>
            <person name="Hole K."/>
            <person name="Larrea E."/>
            <person name="Timmerman E."/>
            <person name="Prieto J."/>
            <person name="Arnesen T."/>
            <person name="Sherman F."/>
            <person name="Gevaert K."/>
            <person name="Aldabe R."/>
        </authorList>
    </citation>
    <scope>ACETYLATION [LARGE SCALE ANALYSIS] AT MET-1</scope>
    <scope>IDENTIFICATION BY MASS SPECTROMETRY [LARGE SCALE ANALYSIS]</scope>
</reference>
<reference key="27">
    <citation type="journal article" date="2014" name="Cancer Res.">
        <title>LIMD2 is a small LIM-only protein overexpressed in metastatic lesions that regulates cell motility and tumor progression by directly binding to and activating the integrin-linked kinase.</title>
        <authorList>
            <person name="Peng H."/>
            <person name="Talebzadeh-Farrooji M."/>
            <person name="Osborne M.J."/>
            <person name="Prokop J.W."/>
            <person name="McDonald P.C."/>
            <person name="Karar J."/>
            <person name="Hou Z."/>
            <person name="He M."/>
            <person name="Kebebew E."/>
            <person name="Orntoft T."/>
            <person name="Herlyn M."/>
            <person name="Caton A.J."/>
            <person name="Fredericks W."/>
            <person name="Malkowicz B."/>
            <person name="Paterno C.S."/>
            <person name="Carolin A.S."/>
            <person name="Speicher D.W."/>
            <person name="Skordalakes E."/>
            <person name="Huang Q."/>
            <person name="Dedhar S."/>
            <person name="Borden K.L."/>
            <person name="Rauscher F.J. III"/>
        </authorList>
    </citation>
    <scope>INTERACTION WITH LIMD2</scope>
</reference>
<reference key="28">
    <citation type="journal article" date="2015" name="Proteomics">
        <title>N-terminome analysis of the human mitochondrial proteome.</title>
        <authorList>
            <person name="Vaca Jacome A.S."/>
            <person name="Rabilloud T."/>
            <person name="Schaeffer-Reiss C."/>
            <person name="Rompais M."/>
            <person name="Ayoub D."/>
            <person name="Lane L."/>
            <person name="Bairoch A."/>
            <person name="Van Dorsselaer A."/>
            <person name="Carapito C."/>
        </authorList>
    </citation>
    <scope>IDENTIFICATION BY MASS SPECTROMETRY [LARGE SCALE ANALYSIS]</scope>
</reference>
<reference key="29">
    <citation type="journal article" date="2020" name="Nature">
        <title>DNA of neutrophil extracellular traps promotes cancer metastasis via CCDC25.</title>
        <authorList>
            <person name="Yang L."/>
            <person name="Liu Q."/>
            <person name="Zhang X."/>
            <person name="Liu X."/>
            <person name="Zhou B."/>
            <person name="Chen J."/>
            <person name="Huang D."/>
            <person name="Li J."/>
            <person name="Li H."/>
            <person name="Chen F."/>
            <person name="Liu J."/>
            <person name="Xing Y."/>
            <person name="Chen X."/>
            <person name="Su S."/>
            <person name="Song E."/>
        </authorList>
    </citation>
    <scope>FUNCTION</scope>
    <scope>INTERACTION WITH CCDC25</scope>
</reference>
<reference key="30">
    <citation type="journal article" date="2022" name="Proc. Natl. Acad. Sci. U.S.A.">
        <title>ATP allosterically stabilizes integrin-linked kinase for efficient force generation.</title>
        <authorList>
            <person name="Martin I.M."/>
            <person name="Nava M.M."/>
            <person name="Wickstroem S.A."/>
            <person name="Graeter F."/>
        </authorList>
    </citation>
    <scope>ROLE OF ATP BINDING</scope>
    <scope>INTERACTION WITH PARVA</scope>
    <scope>SUBCELLULAR LOCATION</scope>
    <scope>MUTAGENESIS OF LEU-207; ARG-225 AND ARG-349</scope>
</reference>
<reference key="31">
    <citation type="journal article" date="2008" name="Proc. Natl. Acad. Sci. U.S.A.">
        <title>The structural basis of integrin-linked kinase-PINCH interactions.</title>
        <authorList>
            <person name="Chiswell B.P."/>
            <person name="Zhang R."/>
            <person name="Murphy J.W."/>
            <person name="Boggon T.J."/>
            <person name="Calderwood D.A."/>
        </authorList>
    </citation>
    <scope>X-RAY CRYSTALLOGRAPHY (1.6 ANGSTROMS) OF 1-174 IN COMPLEX WITH LIMS1</scope>
    <scope>DOMAIN ANK REPEATS</scope>
    <scope>MUTAGENESIS OF HIS-99</scope>
</reference>
<reference key="32">
    <citation type="journal article" date="2009" name="J. Biol. Chem.">
        <title>Structural basis of focal adhesion localization of LIM-only adaptor PINCH by integrin-linked kinase.</title>
        <authorList>
            <person name="Yang Y."/>
            <person name="Wang X."/>
            <person name="Hawkins C.A."/>
            <person name="Chen K."/>
            <person name="Vaynberg J."/>
            <person name="Mao X."/>
            <person name="Tu Y."/>
            <person name="Zuo X."/>
            <person name="Wang J."/>
            <person name="Wang Y.-X."/>
            <person name="Wu C."/>
            <person name="Tjandra N."/>
            <person name="Qin J."/>
        </authorList>
    </citation>
    <scope>STRUCTURE BY NMR OF 1-171 IN COMPLEX WITH LIMS1</scope>
    <scope>DOMAIN ANK REPEATS</scope>
</reference>
<reference evidence="33 34" key="33">
    <citation type="journal article" date="2009" name="Mol. Cell">
        <title>The pseudoactive site of ILK is essential for its binding to alpha-parvin and localization to focal adhesions.</title>
        <authorList>
            <person name="Fukuda K."/>
            <person name="Gupta S."/>
            <person name="Chen K."/>
            <person name="Wu C."/>
            <person name="Qin J."/>
        </authorList>
    </citation>
    <scope>X-RAY CRYSTALLOGRAPHY (1.8 ANGSTROMS) OF 183-452 IN COMPLEX WITH PARVA; ATP AND MG(2+)</scope>
    <scope>LACK OF KINASE ACTIVITY</scope>
    <scope>FUNCTION</scope>
    <scope>INTERACTION WITH PARVA</scope>
    <scope>MUTAGENESIS OF 402-MET-LYS-403</scope>
</reference>
<reference key="34">
    <citation type="journal article" date="2010" name="J. Mol. Biol.">
        <title>Structural basis for asymmetric association of the betaPIX coiled coil and shank PDZ.</title>
        <authorList>
            <person name="Im Y.J."/>
            <person name="Kang G.B."/>
            <person name="Lee J.H."/>
            <person name="Park K.R."/>
            <person name="Song H.E."/>
            <person name="Kim E."/>
            <person name="Song W.K."/>
            <person name="Park D."/>
            <person name="Eom S.H."/>
        </authorList>
    </citation>
    <scope>X-RAY CRYSTALLOGRAPHY (1.8 ANGSTROMS) OF 183-452 IN COMPLEX WITH PARVA</scope>
    <scope>INTERACTION WITH PARVA</scope>
</reference>
<reference evidence="35" key="35">
    <citation type="journal article" date="2011" name="J. Biol. Chem.">
        <title>Biochemical, proteomic, structural, and thermodynamic characterizations of integrin-linked kinase (ILK): cross-validation of the pseudokinase.</title>
        <authorList>
            <person name="Fukuda K."/>
            <person name="Knight J.D."/>
            <person name="Piszczek G."/>
            <person name="Kothary R."/>
            <person name="Qin J."/>
        </authorList>
    </citation>
    <scope>X-RAY CRYSTALLOGRAPHY (1.80 ANGSTROMS) OF 182-452 IN COMPLEX WITH ATP AND MN(2+)</scope>
    <scope>LACK OF KINASE ACTIVITY</scope>
    <scope>INTERACTION WITH PARVA</scope>
    <scope>MUTAGENESIS OF LYS-220</scope>
</reference>
<reference evidence="36" key="36">
    <citation type="journal article" date="2018" name="Nat. Commun.">
        <title>Non-catalytic signaling by pseudokinase ILK for regulating cell adhesion.</title>
        <authorList>
            <person name="Vaynberg J."/>
            <person name="Fukuda K."/>
            <person name="Lu F."/>
            <person name="Bialkowska K."/>
            <person name="Chen Y."/>
            <person name="Plow E.F."/>
            <person name="Qin J."/>
        </authorList>
    </citation>
    <scope>X-RAY CRYSTALLOGRAPHY (1.80 ANGSTROMS) OF 182-452 OF MUTANT TRP-207 IN COMPLEX WITH PARVA</scope>
    <scope>FUNCTION</scope>
    <scope>IDENTIFICATION IN IPP COMPLEX</scope>
    <scope>MUTAGENESIS OF LEU-207</scope>
</reference>
<reference key="37">
    <citation type="journal article" date="2007" name="Circulation">
        <title>Laminin-alpha4 and integrin-linked kinase mutations cause human cardiomyopathy via simultaneous defects in cardiomyocytes and endothelial cells.</title>
        <authorList>
            <person name="Knoell R."/>
            <person name="Postel R."/>
            <person name="Wang J."/>
            <person name="Kraetzner R."/>
            <person name="Hennecke G."/>
            <person name="Vacaru A.M."/>
            <person name="Vakeel P."/>
            <person name="Schubert C."/>
            <person name="Murthy K."/>
            <person name="Rana B.K."/>
            <person name="Kube D."/>
            <person name="Knoell G."/>
            <person name="Schaefer K."/>
            <person name="Hayashi T."/>
            <person name="Holm T."/>
            <person name="Kimura A."/>
            <person name="Schork N."/>
            <person name="Toliat M.R."/>
            <person name="Nuernberg P."/>
            <person name="Schultheiss H.P."/>
            <person name="Schaper W."/>
            <person name="Schaper J."/>
            <person name="Bos E."/>
            <person name="Den Hertog J."/>
            <person name="van Eeden F.J."/>
            <person name="Peters P.J."/>
            <person name="Hasenfuss G."/>
            <person name="Chien K.R."/>
            <person name="Bakkers J."/>
        </authorList>
    </citation>
    <scope>VARIANT VAL-262</scope>
</reference>
<feature type="chain" id="PRO_0000086020" description="Scaffold protein ILK">
    <location>
        <begin position="1"/>
        <end position="452"/>
    </location>
</feature>
<feature type="repeat" description="ANK 1" evidence="14">
    <location>
        <begin position="2"/>
        <end position="30"/>
    </location>
</feature>
<feature type="repeat" description="ANK 2" evidence="14">
    <location>
        <begin position="31"/>
        <end position="63"/>
    </location>
</feature>
<feature type="repeat" description="ANK 3" evidence="14">
    <location>
        <begin position="64"/>
        <end position="96"/>
    </location>
</feature>
<feature type="repeat" description="ANK 4" evidence="14">
    <location>
        <begin position="97"/>
        <end position="129"/>
    </location>
</feature>
<feature type="repeat" description="ANK 5" evidence="14">
    <location>
        <begin position="130"/>
        <end position="174"/>
    </location>
</feature>
<feature type="domain" description="Protein kinase" evidence="3">
    <location>
        <begin position="193"/>
        <end position="446"/>
    </location>
</feature>
<feature type="region of interest" description="Interaction with LIMS1" evidence="6">
    <location>
        <begin position="33"/>
        <end position="139"/>
    </location>
</feature>
<feature type="region of interest" description="PH-like; mediates interaction with TGFB1I1" evidence="1">
    <location>
        <begin position="180"/>
        <end position="212"/>
    </location>
</feature>
<feature type="short sequence motif" description="Nuclear localization signal" evidence="11">
    <location>
        <begin position="363"/>
        <end position="371"/>
    </location>
</feature>
<feature type="binding site" evidence="17 19 34 35">
    <location>
        <position position="200"/>
    </location>
    <ligand>
        <name>ATP</name>
        <dbReference type="ChEBI" id="CHEBI:30616"/>
    </ligand>
</feature>
<feature type="binding site" evidence="17 19 34 35">
    <location>
        <position position="202"/>
    </location>
    <ligand>
        <name>ATP</name>
        <dbReference type="ChEBI" id="CHEBI:30616"/>
    </ligand>
</feature>
<feature type="binding site" evidence="19 35">
    <location>
        <position position="203"/>
    </location>
    <ligand>
        <name>ATP</name>
        <dbReference type="ChEBI" id="CHEBI:30616"/>
    </ligand>
</feature>
<feature type="binding site" evidence="17 19 34 35">
    <location>
        <position position="204"/>
    </location>
    <ligand>
        <name>ATP</name>
        <dbReference type="ChEBI" id="CHEBI:30616"/>
    </ligand>
</feature>
<feature type="binding site" evidence="17 19 34 35">
    <location>
        <position position="220"/>
    </location>
    <ligand>
        <name>ATP</name>
        <dbReference type="ChEBI" id="CHEBI:30616"/>
    </ligand>
</feature>
<feature type="binding site" evidence="17 19 34 35">
    <location>
        <position position="270"/>
    </location>
    <ligand>
        <name>ATP</name>
        <dbReference type="ChEBI" id="CHEBI:30616"/>
    </ligand>
</feature>
<feature type="binding site" evidence="17 19 34 35">
    <location>
        <position position="272"/>
    </location>
    <ligand>
        <name>ATP</name>
        <dbReference type="ChEBI" id="CHEBI:30616"/>
    </ligand>
</feature>
<feature type="binding site" evidence="17 19 34 35">
    <location>
        <position position="279"/>
    </location>
    <ligand>
        <name>ATP</name>
        <dbReference type="ChEBI" id="CHEBI:30616"/>
    </ligand>
</feature>
<feature type="binding site" evidence="17 34">
    <location>
        <position position="339"/>
    </location>
    <ligand>
        <name>Mg(2+)</name>
        <dbReference type="ChEBI" id="CHEBI:18420"/>
    </ligand>
</feature>
<feature type="binding site" evidence="17 19 34 35">
    <location>
        <position position="341"/>
    </location>
    <ligand>
        <name>ATP</name>
        <dbReference type="ChEBI" id="CHEBI:30616"/>
    </ligand>
</feature>
<feature type="modified residue" description="N-acetylmethionine" evidence="38 39">
    <location>
        <position position="1"/>
    </location>
</feature>
<feature type="modified residue" description="Phosphothreonine; by PAK1" evidence="11">
    <location>
        <position position="173"/>
    </location>
</feature>
<feature type="modified residue" description="Phosphoserine" evidence="37">
    <location>
        <position position="186"/>
    </location>
</feature>
<feature type="modified residue" description="Phosphoserine; by PAK1" evidence="11">
    <location>
        <position position="246"/>
    </location>
</feature>
<feature type="modified residue" description="N6-acetyllysine" evidence="1">
    <location>
        <position position="426"/>
    </location>
</feature>
<feature type="splice variant" id="VSP_055925" description="In isoform 3." evidence="28">
    <location>
        <begin position="1"/>
        <end position="134"/>
    </location>
</feature>
<feature type="splice variant" id="VSP_054920" description="In isoform 2." evidence="28">
    <original>DLVANGALVSICNKYGEMPVDKAKAPLRELLRERAEKMGQNLNRIPYKDTFWKGTTRTRPRNGTLNKHSGIDFKQLNFLTKLNENHSGE</original>
    <variation>SGQRRWARISTVFHTRTHSGRGPPALGP</variation>
    <location>
        <begin position="118"/>
        <end position="206"/>
    </location>
</feature>
<feature type="sequence variant" id="VAR_069753" description="Found in a patient with severe dilated cardiomyopathy; uncertain significance; dbSNP:rs387907366." evidence="12">
    <original>A</original>
    <variation>V</variation>
    <location>
        <position position="262"/>
    </location>
</feature>
<feature type="mutagenesis site" description="Loss of interaction with LIMS1 and loss of localization to focal adhesions." evidence="7">
    <original>D</original>
    <variation>A</variation>
    <location>
        <position position="31"/>
    </location>
</feature>
<feature type="mutagenesis site" description="Alters interaction with LIMS1." evidence="14">
    <original>H</original>
    <variation>D</variation>
    <location>
        <position position="99"/>
    </location>
</feature>
<feature type="mutagenesis site" description="Severely reduces PAK1-mediated phosphorylation and increases nuclear localization. Reduced cell proliferation and cell migration; when associated with A-246." evidence="11">
    <original>T</original>
    <variation>A</variation>
    <location>
        <position position="173"/>
    </location>
</feature>
<feature type="mutagenesis site" description="No effect on PAK1-mediated phosphorylation." evidence="11">
    <original>T</original>
    <variation>A</variation>
    <location>
        <position position="181"/>
    </location>
</feature>
<feature type="mutagenesis site" description="Prevents binding of ATP and Mg(2+). Does not affect binding to F-actin but dramatically impairs F-actin filament bundling, cell spreading and cell migration. Does not affect localization to focal adhesions (FA) but promotes FA disassembly and a reduced number of FAs." evidence="21 23">
    <original>L</original>
    <variation>W</variation>
    <location>
        <position position="207"/>
    </location>
</feature>
<feature type="mutagenesis site" description="Reduced interaction with PARVA due to destabilization of ILK." evidence="19">
    <original>K</original>
    <variation>A</variation>
    <variation>M</variation>
    <location>
        <position position="220"/>
    </location>
</feature>
<feature type="mutagenesis site" description="Reduced interaction with PARVA. Decreased focal adhesion assembly and reduced cell migration; when associated with A-349." evidence="23">
    <original>R</original>
    <variation>A</variation>
    <location>
        <position position="225"/>
    </location>
</feature>
<feature type="mutagenesis site" description="No effect on PAK1-mediated phosphorylation." evidence="11">
    <original>S</original>
    <variation>A</variation>
    <location>
        <position position="228"/>
    </location>
</feature>
<feature type="mutagenesis site" description="Severely reduces PAK1-mediated phosphorylation and increases nuclear and focal adhesion localization. Reduced cell proliferation and cell migration; when associated with A-173." evidence="11">
    <original>S</original>
    <variation>A</variation>
    <location>
        <position position="246"/>
    </location>
</feature>
<feature type="mutagenesis site" description="Reduced interaction with PARVA. Decreased focal adhesion assembly and reduced cell migration; when associated with A-225." evidence="23">
    <original>R</original>
    <variation>A</variation>
    <location>
        <position position="349"/>
    </location>
</feature>
<feature type="mutagenesis site" description="Remains almost completely cytoplasmic with little nuclear localization." evidence="11">
    <original>K</original>
    <variation>A</variation>
    <location>
        <position position="363"/>
    </location>
</feature>
<feature type="mutagenesis site" description="Results in nuclear accumulation of the protein and altered cell morphology." evidence="11">
    <original>I</original>
    <variation>A</variation>
    <location>
        <position position="400"/>
    </location>
</feature>
<feature type="mutagenesis site" description="Abolishes binding to PARVA and impairs localization of ILK to focal adhesions." evidence="17">
    <original>MK</original>
    <variation>AA</variation>
    <location>
        <begin position="402"/>
        <end position="403"/>
    </location>
</feature>
<feature type="helix" evidence="42">
    <location>
        <begin position="4"/>
        <end position="10"/>
    </location>
</feature>
<feature type="helix" evidence="42">
    <location>
        <begin position="13"/>
        <end position="21"/>
    </location>
</feature>
<feature type="helix" evidence="42">
    <location>
        <begin position="37"/>
        <end position="43"/>
    </location>
</feature>
<feature type="helix" evidence="42">
    <location>
        <begin position="47"/>
        <end position="55"/>
    </location>
</feature>
<feature type="helix" evidence="42">
    <location>
        <begin position="70"/>
        <end position="76"/>
    </location>
</feature>
<feature type="helix" evidence="42">
    <location>
        <begin position="80"/>
        <end position="88"/>
    </location>
</feature>
<feature type="helix" evidence="40">
    <location>
        <begin position="92"/>
        <end position="94"/>
    </location>
</feature>
<feature type="helix" evidence="42">
    <location>
        <begin position="103"/>
        <end position="109"/>
    </location>
</feature>
<feature type="helix" evidence="42">
    <location>
        <begin position="113"/>
        <end position="121"/>
    </location>
</feature>
<feature type="strand" evidence="42">
    <location>
        <begin position="126"/>
        <end position="128"/>
    </location>
</feature>
<feature type="strand" evidence="40">
    <location>
        <begin position="131"/>
        <end position="133"/>
    </location>
</feature>
<feature type="helix" evidence="42">
    <location>
        <begin position="136"/>
        <end position="139"/>
    </location>
</feature>
<feature type="helix" evidence="42">
    <location>
        <begin position="142"/>
        <end position="154"/>
    </location>
</feature>
<feature type="turn" evidence="43">
    <location>
        <begin position="167"/>
        <end position="169"/>
    </location>
</feature>
<feature type="helix" evidence="41">
    <location>
        <begin position="190"/>
        <end position="192"/>
    </location>
</feature>
<feature type="strand" evidence="41">
    <location>
        <begin position="194"/>
        <end position="202"/>
    </location>
</feature>
<feature type="strand" evidence="41">
    <location>
        <begin position="205"/>
        <end position="212"/>
    </location>
</feature>
<feature type="strand" evidence="41">
    <location>
        <begin position="215"/>
        <end position="222"/>
    </location>
</feature>
<feature type="helix" evidence="41">
    <location>
        <begin position="229"/>
        <end position="238"/>
    </location>
</feature>
<feature type="helix" evidence="41">
    <location>
        <begin position="239"/>
        <end position="242"/>
    </location>
</feature>
<feature type="strand" evidence="41">
    <location>
        <begin position="255"/>
        <end position="257"/>
    </location>
</feature>
<feature type="turn" evidence="41">
    <location>
        <begin position="259"/>
        <end position="261"/>
    </location>
</feature>
<feature type="strand" evidence="41">
    <location>
        <begin position="262"/>
        <end position="264"/>
    </location>
</feature>
<feature type="strand" evidence="41">
    <location>
        <begin position="266"/>
        <end position="270"/>
    </location>
</feature>
<feature type="helix" evidence="41">
    <location>
        <begin position="277"/>
        <end position="282"/>
    </location>
</feature>
<feature type="helix" evidence="41">
    <location>
        <begin position="291"/>
        <end position="308"/>
    </location>
</feature>
<feature type="strand" evidence="41">
    <location>
        <begin position="311"/>
        <end position="313"/>
    </location>
</feature>
<feature type="strand" evidence="41">
    <location>
        <begin position="324"/>
        <end position="327"/>
    </location>
</feature>
<feature type="strand" evidence="41">
    <location>
        <begin position="333"/>
        <end position="336"/>
    </location>
</feature>
<feature type="helix" evidence="41">
    <location>
        <begin position="337"/>
        <end position="339"/>
    </location>
</feature>
<feature type="helix" evidence="41">
    <location>
        <begin position="353"/>
        <end position="355"/>
    </location>
</feature>
<feature type="helix" evidence="41">
    <location>
        <begin position="358"/>
        <end position="362"/>
    </location>
</feature>
<feature type="helix" evidence="41">
    <location>
        <begin position="365"/>
        <end position="367"/>
    </location>
</feature>
<feature type="helix" evidence="41">
    <location>
        <begin position="370"/>
        <end position="387"/>
    </location>
</feature>
<feature type="turn" evidence="41">
    <location>
        <begin position="391"/>
        <end position="394"/>
    </location>
</feature>
<feature type="helix" evidence="41">
    <location>
        <begin position="397"/>
        <end position="406"/>
    </location>
</feature>
<feature type="helix" evidence="41">
    <location>
        <begin position="419"/>
        <end position="428"/>
    </location>
</feature>
<feature type="helix" evidence="41">
    <location>
        <begin position="433"/>
        <end position="435"/>
    </location>
</feature>
<feature type="helix" evidence="41">
    <location>
        <begin position="439"/>
        <end position="449"/>
    </location>
</feature>
<evidence type="ECO:0000250" key="1">
    <source>
        <dbReference type="UniProtKB" id="O55222"/>
    </source>
</evidence>
<evidence type="ECO:0000250" key="2">
    <source>
        <dbReference type="UniProtKB" id="Q99J82"/>
    </source>
</evidence>
<evidence type="ECO:0000255" key="3">
    <source>
        <dbReference type="PROSITE-ProRule" id="PRU00159"/>
    </source>
</evidence>
<evidence type="ECO:0000269" key="4">
    <source>
    </source>
</evidence>
<evidence type="ECO:0000269" key="5">
    <source>
    </source>
</evidence>
<evidence type="ECO:0000269" key="6">
    <source>
    </source>
</evidence>
<evidence type="ECO:0000269" key="7">
    <source>
    </source>
</evidence>
<evidence type="ECO:0000269" key="8">
    <source>
    </source>
</evidence>
<evidence type="ECO:0000269" key="9">
    <source>
    </source>
</evidence>
<evidence type="ECO:0000269" key="10">
    <source>
    </source>
</evidence>
<evidence type="ECO:0000269" key="11">
    <source>
    </source>
</evidence>
<evidence type="ECO:0000269" key="12">
    <source>
    </source>
</evidence>
<evidence type="ECO:0000269" key="13">
    <source>
    </source>
</evidence>
<evidence type="ECO:0000269" key="14">
    <source>
    </source>
</evidence>
<evidence type="ECO:0000269" key="15">
    <source>
    </source>
</evidence>
<evidence type="ECO:0000269" key="16">
    <source>
    </source>
</evidence>
<evidence type="ECO:0000269" key="17">
    <source>
    </source>
</evidence>
<evidence type="ECO:0000269" key="18">
    <source>
    </source>
</evidence>
<evidence type="ECO:0000269" key="19">
    <source>
    </source>
</evidence>
<evidence type="ECO:0000269" key="20">
    <source>
    </source>
</evidence>
<evidence type="ECO:0000269" key="21">
    <source>
    </source>
</evidence>
<evidence type="ECO:0000269" key="22">
    <source>
    </source>
</evidence>
<evidence type="ECO:0000269" key="23">
    <source>
    </source>
</evidence>
<evidence type="ECO:0000269" key="24">
    <source>
    </source>
</evidence>
<evidence type="ECO:0000269" key="25">
    <source>
    </source>
</evidence>
<evidence type="ECO:0000303" key="26">
    <source>
    </source>
</evidence>
<evidence type="ECO:0000303" key="27">
    <source>
    </source>
</evidence>
<evidence type="ECO:0000303" key="28">
    <source>
    </source>
</evidence>
<evidence type="ECO:0000303" key="29">
    <source>
    </source>
</evidence>
<evidence type="ECO:0000305" key="30"/>
<evidence type="ECO:0000305" key="31">
    <source>
    </source>
</evidence>
<evidence type="ECO:0000312" key="32">
    <source>
        <dbReference type="HGNC" id="HGNC:6040"/>
    </source>
</evidence>
<evidence type="ECO:0007744" key="33">
    <source>
        <dbReference type="PDB" id="3KMU"/>
    </source>
</evidence>
<evidence type="ECO:0007744" key="34">
    <source>
        <dbReference type="PDB" id="3KMW"/>
    </source>
</evidence>
<evidence type="ECO:0007744" key="35">
    <source>
        <dbReference type="PDB" id="3REP"/>
    </source>
</evidence>
<evidence type="ECO:0007744" key="36">
    <source>
        <dbReference type="PDB" id="6MIB"/>
    </source>
</evidence>
<evidence type="ECO:0007744" key="37">
    <source>
    </source>
</evidence>
<evidence type="ECO:0007744" key="38">
    <source>
    </source>
</evidence>
<evidence type="ECO:0007744" key="39">
    <source>
    </source>
</evidence>
<evidence type="ECO:0007829" key="40">
    <source>
        <dbReference type="PDB" id="2KBX"/>
    </source>
</evidence>
<evidence type="ECO:0007829" key="41">
    <source>
        <dbReference type="PDB" id="3KMU"/>
    </source>
</evidence>
<evidence type="ECO:0007829" key="42">
    <source>
        <dbReference type="PDB" id="4HI8"/>
    </source>
</evidence>
<evidence type="ECO:0007829" key="43">
    <source>
        <dbReference type="PDB" id="4HI9"/>
    </source>
</evidence>
<name>ILK_HUMAN</name>
<protein>
    <recommendedName>
        <fullName evidence="30">Scaffold protein ILK</fullName>
    </recommendedName>
    <alternativeName>
        <fullName evidence="27">ILK-1</fullName>
    </alternativeName>
    <alternativeName>
        <fullName evidence="27">ILK-2</fullName>
    </alternativeName>
    <alternativeName>
        <fullName evidence="30">Inactive integrin-linked kinase</fullName>
    </alternativeName>
    <alternativeName>
        <fullName evidence="29">p59ILK</fullName>
    </alternativeName>
</protein>
<sequence length="452" mass="51419">MDDIFTQCREGNAVAVRLWLDNTENDLNQGDDHGFSPLHWACREGRSAVVEMLIMRGARINVMNRGDDTPLHLAASHGHRDIVQKLLQYKADINAVNEHGNVPLHYACFWGQDQVAEDLVANGALVSICNKYGEMPVDKAKAPLRELLRERAEKMGQNLNRIPYKDTFWKGTTRTRPRNGTLNKHSGIDFKQLNFLTKLNENHSGELWKGRWQGNDIVVKVLKVRDWSTRKSRDFNEECPRLRIFSHPNVLPVLGACQSPPAPHPTLITHWMPYGSLYNVLHEGTNFVVDQSQAVKFALDMARGMAFLHTLEPLIPRHALNSRSVMIDEDMTARISMADVKFSFQCPGRMYAPAWVAPEALQKKPEDTNRRSADMWSFAVLLWELVTREVPFADLSNMEIGMKVALEGLRPTIPPGISPHVCKLMKICMNEDPAKRPKFDMIVPILEKMQDK</sequence>
<comment type="function">
    <text evidence="1 2 10 11 13 17 21 22 25">Scaffold protein which mediates protein-protein interactions during a range of cellular events including focal adhesion assembly, cell adhesion and cell migration (PubMed:17420447, PubMed:20005845, PubMed:30367047, PubMed:32528174). Regulates integrin-mediated signal transduction by contributing to inside-out integrin activation (By similarity). Recruits PARVA and LIMS1/PITCH to form the heterotrimeric IPP (ILK-PINCH-PARVIN) complex which binds to F-actin via the C-terminal tail of LIMS1 and the N-terminal region of PARVA, promoting F-actin filament bundling, a process required to generate force for actin cytoskeleton reorganization and subsequent dynamic cell adhesion events such as cell spreading and migration (PubMed:30367047). Binding to PARVA promotes effective assembly of ILK into focal adhesions while PARVA-bound ILK can simultaneously engage integrin-beta cytoplasmic tails to mediate cell adhesion (PubMed:20005845). Plays a role with PARVG in promoting the cell adhesion and spreading of leukocytes (PubMed:16517730). Acts as an upstream effector of both AKT1/PKB and GSK3 (PubMed:9736715). Mediates trafficking of caveolae to the cell surface in an ITGB1-dependent manner by promoting the recruitment of IQGAP1 to the cell cortex which cooperates with its effector DIAPH1 to locally stabilize microtubules and allow stable insertion of caveolae into the plasma membrane (By similarity). Required for the maintenance of mitotic spindle integrity by promoting phosphorylation of TACC3 by AURKA (PubMed:18283114). Associates with chromatin and may act as a negative regulator of transcription when located in the nucleus (PubMed:17420447).</text>
</comment>
<comment type="subunit">
    <text evidence="1 4 5 6 7 8 9 10 14 15 16 17 18 19 20 21 22 23 24 26">Component of the heterotrimeric IPP (ILK-PINCH-PARVIN) complex composed of ILK, LIMS1/PINCH and PARVA; the complex binds to F-actin via the C-terminal tail of LIMS1 and the N-terminal region of PARVA, promoting F-actin filament bundling (PubMed:11331308, PubMed:12167643, PubMed:12432066, PubMed:19074270, PubMed:19117955, PubMed:21524996, PubMed:30367047, PubMed:35259013). Formation of the IPP complex is dependent on protein kinase C and precedes integrin-mediated cell adhesion and spreading (PubMed:12432066). ILK also interacts with LIMS2/PINCH2 and with PARVB and PARVG which may substitute for LIMS1 and PARVA in the IPP complex; PARVA and PARVB compete for the same binding site (PubMed:11402068, PubMed:12167643, PubMed:15284246, PubMed:15817463, PubMed:16517730, PubMed:20005845, PubMed:20117114). Interaction with PARVG promotes the establishment of cell polarity required for leukocyte migration (PubMed:16517730). Interacts with the cytoplasmic domain of integrin ITGB1 and may also interact with integrins ITGB2, ITGB3 and/or ITGB5 (PubMed:8538749). Interacts probably also with TGFB1I1 (By similarity). Interacts (via ANK repeats) with EPHA1 (via SAM domain); stimulated by EFNA1 but independent of the kinase activity of EPHA1 (PubMed:19118217). Interacts with FERMT2 (By similarity). Interacts with LIMD2; leading to activate the protein kinase activity (PubMed:24590809). Interacts with PXN/PAXILLIN (via LD motif 4) (PubMed:15817463). Interacts with CCDC25 (via cytoplasmic region); initiating the ILK-PARVB cascade to induce cytoskeleton rearrangement and directional migration of cells (PubMed:32528174). Interacts with IQGAP1; the interaction is required for localization of IQGAP1 to the cell cortex (By similarity).</text>
</comment>
<comment type="interaction">
    <interactant intactId="EBI-747644">
        <id>Q13418</id>
    </interactant>
    <interactant intactId="EBI-78060">
        <id>Q14790</id>
        <label>CASP8</label>
    </interactant>
    <organismsDiffer>false</organismsDiffer>
    <experiments>2</experiments>
</comment>
<comment type="interaction">
    <interactant intactId="EBI-747644">
        <id>Q13418</id>
    </interactant>
    <interactant intactId="EBI-516799">
        <id>P55211</id>
        <label>CASP9</label>
    </interactant>
    <organismsDiffer>false</organismsDiffer>
    <experiments>2</experiments>
</comment>
<comment type="interaction">
    <interactant intactId="EBI-747644">
        <id>Q13418</id>
    </interactant>
    <interactant intactId="EBI-745632">
        <id>Q9NWT6</id>
        <label>HIF1AN</label>
    </interactant>
    <organismsDiffer>false</organismsDiffer>
    <experiments>2</experiments>
</comment>
<comment type="interaction">
    <interactant intactId="EBI-747644">
        <id>Q13418</id>
    </interactant>
    <interactant intactId="EBI-352572">
        <id>P08238</id>
        <label>HSP90AB1</label>
    </interactant>
    <organismsDiffer>false</organismsDiffer>
    <experiments>2</experiments>
</comment>
<comment type="interaction">
    <interactant intactId="EBI-747644">
        <id>Q13418</id>
    </interactant>
    <interactant intactId="EBI-2620298">
        <id>Q9H0C8</id>
        <label>ILKAP</label>
    </interactant>
    <organismsDiffer>false</organismsDiffer>
    <experiments>3</experiments>
</comment>
<comment type="interaction">
    <interactant intactId="EBI-747644">
        <id>Q13418</id>
    </interactant>
    <interactant intactId="EBI-306928">
        <id>P48059</id>
        <label>LIMS1</label>
    </interactant>
    <organismsDiffer>false</organismsDiffer>
    <experiments>17</experiments>
</comment>
<comment type="interaction">
    <interactant intactId="EBI-747644">
        <id>Q13418</id>
    </interactant>
    <interactant intactId="EBI-12864460">
        <id>P48059-3</id>
        <label>LIMS1</label>
    </interactant>
    <organismsDiffer>false</organismsDiffer>
    <experiments>3</experiments>
</comment>
<comment type="interaction">
    <interactant intactId="EBI-747644">
        <id>Q13418</id>
    </interactant>
    <interactant intactId="EBI-747655">
        <id>Q9NVD7</id>
        <label>PARVA</label>
    </interactant>
    <organismsDiffer>false</organismsDiffer>
    <experiments>26</experiments>
</comment>
<comment type="interaction">
    <interactant intactId="EBI-747644">
        <id>Q13418</id>
    </interactant>
    <interactant intactId="EBI-3921217">
        <id>Q9HBI0</id>
        <label>PARVG</label>
    </interactant>
    <organismsDiffer>false</organismsDiffer>
    <experiments>14</experiments>
</comment>
<comment type="interaction">
    <interactant intactId="EBI-747644">
        <id>Q13418</id>
    </interactant>
    <interactant intactId="EBI-1387196">
        <id>Q6R327</id>
        <label>RICTOR</label>
    </interactant>
    <organismsDiffer>false</organismsDiffer>
    <experiments>8</experiments>
</comment>
<comment type="interaction">
    <interactant intactId="EBI-747644">
        <id>Q13418</id>
    </interactant>
    <interactant intactId="EBI-1999704">
        <id>Q9BWU0</id>
        <label>SLC4A1AP</label>
    </interactant>
    <organismsDiffer>false</organismsDiffer>
    <experiments>7</experiments>
</comment>
<comment type="interaction">
    <interactant intactId="EBI-747644">
        <id>Q13418</id>
    </interactant>
    <interactant intactId="EBI-3453434">
        <id>Q9UMS6</id>
        <label>SYNPO2</label>
    </interactant>
    <organismsDiffer>false</organismsDiffer>
    <experiments>6</experiments>
</comment>
<comment type="interaction">
    <interactant intactId="EBI-747644">
        <id>Q13418</id>
    </interactant>
    <interactant intactId="EBI-719493">
        <id>P14373</id>
        <label>TRIM27</label>
    </interactant>
    <organismsDiffer>false</organismsDiffer>
    <experiments>4</experiments>
</comment>
<comment type="interaction">
    <interactant intactId="EBI-747644">
        <id>Q13418</id>
    </interactant>
    <interactant intactId="EBI-356498">
        <id>P62258</id>
        <label>YWHAE</label>
    </interactant>
    <organismsDiffer>false</organismsDiffer>
    <experiments>2</experiments>
</comment>
<comment type="subcellular location">
    <subcellularLocation>
        <location evidence="5 6 7 23">Cell junction</location>
        <location evidence="5 6 7 23">Focal adhesion</location>
    </subcellularLocation>
    <subcellularLocation>
        <location evidence="5">Cell membrane</location>
        <topology evidence="5">Peripheral membrane protein</topology>
        <orientation evidence="5">Cytoplasmic side</orientation>
    </subcellularLocation>
    <subcellularLocation>
        <location evidence="1">Cell projection</location>
        <location evidence="1">Lamellipodium</location>
    </subcellularLocation>
    <subcellularLocation>
        <location evidence="5">Cytoplasm</location>
        <location evidence="5">Myofibril</location>
        <location evidence="5">Sarcomere</location>
    </subcellularLocation>
    <subcellularLocation>
        <location evidence="11">Cytoplasm</location>
    </subcellularLocation>
    <subcellularLocation>
        <location evidence="11">Nucleus</location>
    </subcellularLocation>
    <subcellularLocation>
        <location evidence="13">Cytoplasm</location>
        <location evidence="13">Cytoskeleton</location>
        <location evidence="13">Microtubule organizing center</location>
        <location evidence="13">Centrosome</location>
    </subcellularLocation>
    <subcellularLocation>
        <location evidence="1">Cytoplasm</location>
        <location evidence="1">Cell cortex</location>
    </subcellularLocation>
</comment>
<comment type="alternative products">
    <event type="alternative splicing"/>
    <isoform>
        <id>Q13418-1</id>
        <name>1</name>
        <sequence type="displayed"/>
    </isoform>
    <isoform>
        <id>Q13418-2</id>
        <name>2</name>
        <sequence type="described" ref="VSP_054920"/>
    </isoform>
    <isoform>
        <id>Q13418-3</id>
        <name>3</name>
        <sequence type="described" ref="VSP_055925"/>
    </isoform>
</comment>
<comment type="tissue specificity">
    <text>Highly expressed in heart followed by skeletal muscle, pancreas and kidney. Weakly expressed in placenta, lung and liver.</text>
</comment>
<comment type="domain">
    <text evidence="17 19 23">The kinase domain is likely to have lost catalytic activity but retains ATP-binding activity (PubMed:20005845, PubMed:21524996). ATP structurally stabilizes the kinase domain and promotes stability of binding to PARVA as well as focal adhesion stability (PubMed:35259013).</text>
</comment>
<comment type="domain">
    <text evidence="7">The PH-like region is not required for assembly of the IPP complex or for localization of ILK to focal adhesions.</text>
</comment>
<comment type="PTM">
    <text evidence="11">Phosphorylation by PAK1 modulates ILK subcellular location by promoting its nuclear export.</text>
</comment>
<comment type="similarity">
    <text evidence="30">Belongs to the protein kinase superfamily. TKL Ser/Thr protein kinase family.</text>
</comment>
<comment type="caution">
    <text evidence="17 19 21 29">Was originally thought to act as a serine/threonine-protein kinase (PubMed:8538749). Now thought to be a pseudokinase which does not have kinase activity and which functions solely as a scaffold protein (PubMed:20005845, PubMed:21524996, PubMed:30367047).</text>
</comment>
<comment type="sequence caution" evidence="31">
    <conflict type="miscellaneous discrepancy">
        <sequence resource="EMBL-CDS" id="CAB94832"/>
    </conflict>
    <text>Probable cloning artifact. Was originally thought to be distinct gene (ILK2) (PubMed:10871859).</text>
</comment>
<organism>
    <name type="scientific">Homo sapiens</name>
    <name type="common">Human</name>
    <dbReference type="NCBI Taxonomy" id="9606"/>
    <lineage>
        <taxon>Eukaryota</taxon>
        <taxon>Metazoa</taxon>
        <taxon>Chordata</taxon>
        <taxon>Craniata</taxon>
        <taxon>Vertebrata</taxon>
        <taxon>Euteleostomi</taxon>
        <taxon>Mammalia</taxon>
        <taxon>Eutheria</taxon>
        <taxon>Euarchontoglires</taxon>
        <taxon>Primates</taxon>
        <taxon>Haplorrhini</taxon>
        <taxon>Catarrhini</taxon>
        <taxon>Hominidae</taxon>
        <taxon>Homo</taxon>
    </lineage>
</organism>